<proteinExistence type="evidence at transcript level"/>
<evidence type="ECO:0000250" key="1">
    <source>
        <dbReference type="UniProtKB" id="Q8NDC0"/>
    </source>
</evidence>
<evidence type="ECO:0000256" key="2">
    <source>
        <dbReference type="SAM" id="MobiDB-lite"/>
    </source>
</evidence>
<evidence type="ECO:0000305" key="3"/>
<comment type="similarity">
    <text evidence="3">Belongs to the MISS family.</text>
</comment>
<name>MISSL_PONAB</name>
<keyword id="KW-0007">Acetylation</keyword>
<keyword id="KW-0597">Phosphoprotein</keyword>
<keyword id="KW-1185">Reference proteome</keyword>
<dbReference type="EMBL" id="CR860677">
    <property type="protein sequence ID" value="CAH92793.1"/>
    <property type="molecule type" value="mRNA"/>
</dbReference>
<dbReference type="RefSeq" id="NP_001126630.1">
    <property type="nucleotide sequence ID" value="NM_001133158.1"/>
</dbReference>
<dbReference type="SMR" id="Q5R623"/>
<dbReference type="FunCoup" id="Q5R623">
    <property type="interactions" value="1543"/>
</dbReference>
<dbReference type="STRING" id="9601.ENSPPYP00000006631"/>
<dbReference type="Ensembl" id="ENSPPYT00000059160.1">
    <property type="protein sequence ID" value="ENSPPYP00000038261.1"/>
    <property type="gene ID" value="ENSPPYG00000039502.1"/>
</dbReference>
<dbReference type="GeneID" id="100173627"/>
<dbReference type="KEGG" id="pon:100173627"/>
<dbReference type="CTD" id="93487"/>
<dbReference type="eggNOG" id="ENOG502RYAB">
    <property type="taxonomic scope" value="Eukaryota"/>
</dbReference>
<dbReference type="GeneTree" id="ENSGT00730000111340"/>
<dbReference type="HOGENOM" id="CLU_063887_0_0_1"/>
<dbReference type="InParanoid" id="Q5R623"/>
<dbReference type="OMA" id="TPSMPYP"/>
<dbReference type="OrthoDB" id="9398504at2759"/>
<dbReference type="Proteomes" id="UP000001595">
    <property type="component" value="Chromosome 14"/>
</dbReference>
<dbReference type="InterPro" id="IPR031653">
    <property type="entry name" value="MISS"/>
</dbReference>
<dbReference type="PANTHER" id="PTHR35973">
    <property type="entry name" value="MAPK-INTERACTING AND SPINDLE-STABILIZING PROTEIN-LIKE"/>
    <property type="match status" value="1"/>
</dbReference>
<dbReference type="PANTHER" id="PTHR35973:SF1">
    <property type="entry name" value="MAPK-INTERACTING AND SPINDLE-STABILIZING PROTEIN-LIKE"/>
    <property type="match status" value="1"/>
</dbReference>
<dbReference type="Pfam" id="PF15822">
    <property type="entry name" value="MISS"/>
    <property type="match status" value="1"/>
</dbReference>
<reference key="1">
    <citation type="submission" date="2004-11" db="EMBL/GenBank/DDBJ databases">
        <authorList>
            <consortium name="The German cDNA consortium"/>
        </authorList>
    </citation>
    <scope>NUCLEOTIDE SEQUENCE [LARGE SCALE MRNA]</scope>
    <source>
        <tissue>Brain cortex</tissue>
    </source>
</reference>
<sequence length="245" mass="24269">MSDEFSLADALPEHSPAKTSAVSNTKPGQPPQGWPGSNPWNNPSAPSSVPSGLPPSATPSTVPFGPAPTGMYPSVPPTGPPPGPPAPFPPSGPSCPPPGGPYPAPTVPGPGPTGPYPTPNMPFPELPRPYGAPTDPAAAGPLGPWGSMSSGPWAPGMGGQYPTPNMPYPSPGPYPAPPPPQAPGAAPPVPWGTVPPGAWGPPAPYPAPTGSYPTPGLYPTPSNPFQVPSGPSGAPPMPGGPHSYH</sequence>
<accession>Q5R623</accession>
<protein>
    <recommendedName>
        <fullName>MAPK-interacting and spindle-stabilizing protein-like</fullName>
    </recommendedName>
    <alternativeName>
        <fullName>Mitogen-activated protein kinase 1-interacting protein 1-like</fullName>
    </alternativeName>
</protein>
<organism>
    <name type="scientific">Pongo abelii</name>
    <name type="common">Sumatran orangutan</name>
    <name type="synonym">Pongo pygmaeus abelii</name>
    <dbReference type="NCBI Taxonomy" id="9601"/>
    <lineage>
        <taxon>Eukaryota</taxon>
        <taxon>Metazoa</taxon>
        <taxon>Chordata</taxon>
        <taxon>Craniata</taxon>
        <taxon>Vertebrata</taxon>
        <taxon>Euteleostomi</taxon>
        <taxon>Mammalia</taxon>
        <taxon>Eutheria</taxon>
        <taxon>Euarchontoglires</taxon>
        <taxon>Primates</taxon>
        <taxon>Haplorrhini</taxon>
        <taxon>Catarrhini</taxon>
        <taxon>Hominidae</taxon>
        <taxon>Pongo</taxon>
    </lineage>
</organism>
<gene>
    <name type="primary">MAPK1IP1L</name>
</gene>
<feature type="initiator methionine" description="Removed" evidence="1">
    <location>
        <position position="1"/>
    </location>
</feature>
<feature type="chain" id="PRO_0000209893" description="MAPK-interacting and spindle-stabilizing protein-like">
    <location>
        <begin position="2"/>
        <end position="245"/>
    </location>
</feature>
<feature type="region of interest" description="Disordered" evidence="2">
    <location>
        <begin position="1"/>
        <end position="245"/>
    </location>
</feature>
<feature type="compositionally biased region" description="Polar residues" evidence="2">
    <location>
        <begin position="17"/>
        <end position="26"/>
    </location>
</feature>
<feature type="compositionally biased region" description="Low complexity" evidence="2">
    <location>
        <begin position="34"/>
        <end position="51"/>
    </location>
</feature>
<feature type="compositionally biased region" description="Pro residues" evidence="2">
    <location>
        <begin position="74"/>
        <end position="127"/>
    </location>
</feature>
<feature type="compositionally biased region" description="Pro residues" evidence="2">
    <location>
        <begin position="164"/>
        <end position="190"/>
    </location>
</feature>
<feature type="compositionally biased region" description="Pro residues" evidence="2">
    <location>
        <begin position="198"/>
        <end position="207"/>
    </location>
</feature>
<feature type="modified residue" description="N-acetylserine" evidence="1">
    <location>
        <position position="2"/>
    </location>
</feature>
<feature type="modified residue" description="Phosphoserine" evidence="1">
    <location>
        <position position="2"/>
    </location>
</feature>
<feature type="modified residue" description="Phosphoserine" evidence="1">
    <location>
        <position position="6"/>
    </location>
</feature>
<feature type="modified residue" description="Phosphoserine" evidence="1">
    <location>
        <position position="15"/>
    </location>
</feature>